<sequence length="169" mass="18765">MADSKKPAIKKPVPKGDRKANRRGAARLAAVQALYQMDIGGAGINETFAEFESHWIGNEVEGDQYLPAEAAFFRDVVSGVVRDQKKLDPLIDDALAKGWPLARIDAILRAVMRAGAYELEHRKDIPARVVVSEYVDVAHAFVEKDETGMVNAVLDQIARQFREDEFTRG</sequence>
<comment type="function">
    <text evidence="1">Involved in transcription antitermination. Required for transcription of ribosomal RNA (rRNA) genes. Binds specifically to the boxA antiterminator sequence of the ribosomal RNA (rrn) operons.</text>
</comment>
<comment type="similarity">
    <text evidence="1">Belongs to the NusB family.</text>
</comment>
<proteinExistence type="inferred from homology"/>
<organism>
    <name type="scientific">Rhodopseudomonas palustris (strain HaA2)</name>
    <dbReference type="NCBI Taxonomy" id="316058"/>
    <lineage>
        <taxon>Bacteria</taxon>
        <taxon>Pseudomonadati</taxon>
        <taxon>Pseudomonadota</taxon>
        <taxon>Alphaproteobacteria</taxon>
        <taxon>Hyphomicrobiales</taxon>
        <taxon>Nitrobacteraceae</taxon>
        <taxon>Rhodopseudomonas</taxon>
    </lineage>
</organism>
<keyword id="KW-1185">Reference proteome</keyword>
<keyword id="KW-0694">RNA-binding</keyword>
<keyword id="KW-0804">Transcription</keyword>
<keyword id="KW-0889">Transcription antitermination</keyword>
<keyword id="KW-0805">Transcription regulation</keyword>
<name>NUSB_RHOP2</name>
<accession>Q2IWR9</accession>
<reference key="1">
    <citation type="submission" date="2006-01" db="EMBL/GenBank/DDBJ databases">
        <title>Complete sequence of Rhodopseudomonas palustris HaA2.</title>
        <authorList>
            <consortium name="US DOE Joint Genome Institute"/>
            <person name="Copeland A."/>
            <person name="Lucas S."/>
            <person name="Lapidus A."/>
            <person name="Barry K."/>
            <person name="Detter J.C."/>
            <person name="Glavina T."/>
            <person name="Hammon N."/>
            <person name="Israni S."/>
            <person name="Pitluck S."/>
            <person name="Chain P."/>
            <person name="Malfatti S."/>
            <person name="Shin M."/>
            <person name="Vergez L."/>
            <person name="Schmutz J."/>
            <person name="Larimer F."/>
            <person name="Land M."/>
            <person name="Hauser L."/>
            <person name="Pelletier D.A."/>
            <person name="Kyrpides N."/>
            <person name="Anderson I."/>
            <person name="Oda Y."/>
            <person name="Harwood C.S."/>
            <person name="Richardson P."/>
        </authorList>
    </citation>
    <scope>NUCLEOTIDE SEQUENCE [LARGE SCALE GENOMIC DNA]</scope>
    <source>
        <strain>HaA2</strain>
    </source>
</reference>
<feature type="chain" id="PRO_0000265578" description="Transcription antitermination protein NusB">
    <location>
        <begin position="1"/>
        <end position="169"/>
    </location>
</feature>
<feature type="region of interest" description="Disordered" evidence="2">
    <location>
        <begin position="1"/>
        <end position="23"/>
    </location>
</feature>
<dbReference type="EMBL" id="CP000250">
    <property type="protein sequence ID" value="ABD07341.1"/>
    <property type="molecule type" value="Genomic_DNA"/>
</dbReference>
<dbReference type="RefSeq" id="WP_011441526.1">
    <property type="nucleotide sequence ID" value="NC_007778.1"/>
</dbReference>
<dbReference type="SMR" id="Q2IWR9"/>
<dbReference type="STRING" id="316058.RPB_2639"/>
<dbReference type="KEGG" id="rpb:RPB_2639"/>
<dbReference type="eggNOG" id="COG0781">
    <property type="taxonomic scope" value="Bacteria"/>
</dbReference>
<dbReference type="HOGENOM" id="CLU_087843_4_0_5"/>
<dbReference type="OrthoDB" id="9797817at2"/>
<dbReference type="Proteomes" id="UP000008809">
    <property type="component" value="Chromosome"/>
</dbReference>
<dbReference type="GO" id="GO:0005829">
    <property type="term" value="C:cytosol"/>
    <property type="evidence" value="ECO:0007669"/>
    <property type="project" value="TreeGrafter"/>
</dbReference>
<dbReference type="GO" id="GO:0003723">
    <property type="term" value="F:RNA binding"/>
    <property type="evidence" value="ECO:0007669"/>
    <property type="project" value="UniProtKB-UniRule"/>
</dbReference>
<dbReference type="GO" id="GO:0006353">
    <property type="term" value="P:DNA-templated transcription termination"/>
    <property type="evidence" value="ECO:0007669"/>
    <property type="project" value="UniProtKB-UniRule"/>
</dbReference>
<dbReference type="GO" id="GO:0031564">
    <property type="term" value="P:transcription antitermination"/>
    <property type="evidence" value="ECO:0007669"/>
    <property type="project" value="UniProtKB-KW"/>
</dbReference>
<dbReference type="Gene3D" id="1.10.940.10">
    <property type="entry name" value="NusB-like"/>
    <property type="match status" value="1"/>
</dbReference>
<dbReference type="HAMAP" id="MF_00073">
    <property type="entry name" value="NusB"/>
    <property type="match status" value="1"/>
</dbReference>
<dbReference type="InterPro" id="IPR035926">
    <property type="entry name" value="NusB-like_sf"/>
</dbReference>
<dbReference type="InterPro" id="IPR011605">
    <property type="entry name" value="NusB_fam"/>
</dbReference>
<dbReference type="InterPro" id="IPR006027">
    <property type="entry name" value="NusB_RsmB_TIM44"/>
</dbReference>
<dbReference type="NCBIfam" id="TIGR01951">
    <property type="entry name" value="nusB"/>
    <property type="match status" value="1"/>
</dbReference>
<dbReference type="PANTHER" id="PTHR11078:SF3">
    <property type="entry name" value="ANTITERMINATION NUSB DOMAIN-CONTAINING PROTEIN"/>
    <property type="match status" value="1"/>
</dbReference>
<dbReference type="PANTHER" id="PTHR11078">
    <property type="entry name" value="N UTILIZATION SUBSTANCE PROTEIN B-RELATED"/>
    <property type="match status" value="1"/>
</dbReference>
<dbReference type="Pfam" id="PF01029">
    <property type="entry name" value="NusB"/>
    <property type="match status" value="1"/>
</dbReference>
<dbReference type="SUPFAM" id="SSF48013">
    <property type="entry name" value="NusB-like"/>
    <property type="match status" value="1"/>
</dbReference>
<protein>
    <recommendedName>
        <fullName evidence="1">Transcription antitermination protein NusB</fullName>
    </recommendedName>
    <alternativeName>
        <fullName evidence="1">Antitermination factor NusB</fullName>
    </alternativeName>
</protein>
<evidence type="ECO:0000255" key="1">
    <source>
        <dbReference type="HAMAP-Rule" id="MF_00073"/>
    </source>
</evidence>
<evidence type="ECO:0000256" key="2">
    <source>
        <dbReference type="SAM" id="MobiDB-lite"/>
    </source>
</evidence>
<gene>
    <name evidence="1" type="primary">nusB</name>
    <name type="ordered locus">RPB_2639</name>
</gene>